<proteinExistence type="inferred from homology"/>
<sequence length="163" mass="17297">MSFNFRIGQGYDVHAFGPGEHVMLGGVRVAHSHGVLAHSDGDVVLHALCDAMLGALALGDIGRHFPPSDERWKDADSAQFLQHCDGLLRERGWRVGNADITVICERPKVGPHAVAMRERIAGLLAIELDAVSVKATTSEQLGFTGRGEGIAAQAAVLLGRIAA</sequence>
<evidence type="ECO:0000255" key="1">
    <source>
        <dbReference type="HAMAP-Rule" id="MF_00107"/>
    </source>
</evidence>
<gene>
    <name evidence="1" type="primary">ispF</name>
    <name type="ordered locus">XOO2811</name>
</gene>
<organism>
    <name type="scientific">Xanthomonas oryzae pv. oryzae (strain MAFF 311018)</name>
    <dbReference type="NCBI Taxonomy" id="342109"/>
    <lineage>
        <taxon>Bacteria</taxon>
        <taxon>Pseudomonadati</taxon>
        <taxon>Pseudomonadota</taxon>
        <taxon>Gammaproteobacteria</taxon>
        <taxon>Lysobacterales</taxon>
        <taxon>Lysobacteraceae</taxon>
        <taxon>Xanthomonas</taxon>
    </lineage>
</organism>
<keyword id="KW-0414">Isoprene biosynthesis</keyword>
<keyword id="KW-0456">Lyase</keyword>
<keyword id="KW-0479">Metal-binding</keyword>
<name>ISPF_XANOM</name>
<accession>Q2P1L1</accession>
<reference key="1">
    <citation type="journal article" date="2005" name="Jpn. Agric. Res. Q.">
        <title>Genome sequence of Xanthomonas oryzae pv. oryzae suggests contribution of large numbers of effector genes and insertion sequences to its race diversity.</title>
        <authorList>
            <person name="Ochiai H."/>
            <person name="Inoue Y."/>
            <person name="Takeya M."/>
            <person name="Sasaki A."/>
            <person name="Kaku H."/>
        </authorList>
    </citation>
    <scope>NUCLEOTIDE SEQUENCE [LARGE SCALE GENOMIC DNA]</scope>
    <source>
        <strain>MAFF 311018</strain>
    </source>
</reference>
<dbReference type="EC" id="4.6.1.12" evidence="1"/>
<dbReference type="EMBL" id="AP008229">
    <property type="protein sequence ID" value="BAE69566.1"/>
    <property type="molecule type" value="Genomic_DNA"/>
</dbReference>
<dbReference type="RefSeq" id="WP_011259526.1">
    <property type="nucleotide sequence ID" value="NC_007705.1"/>
</dbReference>
<dbReference type="SMR" id="Q2P1L1"/>
<dbReference type="KEGG" id="xom:XOO2811"/>
<dbReference type="HOGENOM" id="CLU_084630_2_0_6"/>
<dbReference type="UniPathway" id="UPA00056">
    <property type="reaction ID" value="UER00095"/>
</dbReference>
<dbReference type="GO" id="GO:0008685">
    <property type="term" value="F:2-C-methyl-D-erythritol 2,4-cyclodiphosphate synthase activity"/>
    <property type="evidence" value="ECO:0007669"/>
    <property type="project" value="UniProtKB-UniRule"/>
</dbReference>
<dbReference type="GO" id="GO:0046872">
    <property type="term" value="F:metal ion binding"/>
    <property type="evidence" value="ECO:0007669"/>
    <property type="project" value="UniProtKB-KW"/>
</dbReference>
<dbReference type="GO" id="GO:0019288">
    <property type="term" value="P:isopentenyl diphosphate biosynthetic process, methylerythritol 4-phosphate pathway"/>
    <property type="evidence" value="ECO:0007669"/>
    <property type="project" value="UniProtKB-UniRule"/>
</dbReference>
<dbReference type="GO" id="GO:0016114">
    <property type="term" value="P:terpenoid biosynthetic process"/>
    <property type="evidence" value="ECO:0007669"/>
    <property type="project" value="InterPro"/>
</dbReference>
<dbReference type="CDD" id="cd00554">
    <property type="entry name" value="MECDP_synthase"/>
    <property type="match status" value="1"/>
</dbReference>
<dbReference type="FunFam" id="3.30.1330.50:FF:000001">
    <property type="entry name" value="2-C-methyl-D-erythritol 2,4-cyclodiphosphate synthase"/>
    <property type="match status" value="1"/>
</dbReference>
<dbReference type="Gene3D" id="3.30.1330.50">
    <property type="entry name" value="2-C-methyl-D-erythritol 2,4-cyclodiphosphate synthase"/>
    <property type="match status" value="1"/>
</dbReference>
<dbReference type="HAMAP" id="MF_00107">
    <property type="entry name" value="IspF"/>
    <property type="match status" value="1"/>
</dbReference>
<dbReference type="InterPro" id="IPR003526">
    <property type="entry name" value="MECDP_synthase"/>
</dbReference>
<dbReference type="InterPro" id="IPR020555">
    <property type="entry name" value="MECDP_synthase_CS"/>
</dbReference>
<dbReference type="InterPro" id="IPR036571">
    <property type="entry name" value="MECDP_synthase_sf"/>
</dbReference>
<dbReference type="NCBIfam" id="TIGR00151">
    <property type="entry name" value="ispF"/>
    <property type="match status" value="1"/>
</dbReference>
<dbReference type="PANTHER" id="PTHR43181">
    <property type="entry name" value="2-C-METHYL-D-ERYTHRITOL 2,4-CYCLODIPHOSPHATE SYNTHASE, CHLOROPLASTIC"/>
    <property type="match status" value="1"/>
</dbReference>
<dbReference type="PANTHER" id="PTHR43181:SF1">
    <property type="entry name" value="2-C-METHYL-D-ERYTHRITOL 2,4-CYCLODIPHOSPHATE SYNTHASE, CHLOROPLASTIC"/>
    <property type="match status" value="1"/>
</dbReference>
<dbReference type="Pfam" id="PF02542">
    <property type="entry name" value="YgbB"/>
    <property type="match status" value="1"/>
</dbReference>
<dbReference type="SUPFAM" id="SSF69765">
    <property type="entry name" value="IpsF-like"/>
    <property type="match status" value="1"/>
</dbReference>
<dbReference type="PROSITE" id="PS01350">
    <property type="entry name" value="ISPF"/>
    <property type="match status" value="1"/>
</dbReference>
<protein>
    <recommendedName>
        <fullName evidence="1">2-C-methyl-D-erythritol 2,4-cyclodiphosphate synthase</fullName>
        <shortName evidence="1">MECDP-synthase</shortName>
        <shortName evidence="1">MECPP-synthase</shortName>
        <shortName evidence="1">MECPS</shortName>
        <ecNumber evidence="1">4.6.1.12</ecNumber>
    </recommendedName>
</protein>
<feature type="chain" id="PRO_0000237767" description="2-C-methyl-D-erythritol 2,4-cyclodiphosphate synthase">
    <location>
        <begin position="1"/>
        <end position="163"/>
    </location>
</feature>
<feature type="binding site" evidence="1">
    <location>
        <begin position="12"/>
        <end position="14"/>
    </location>
    <ligand>
        <name>4-CDP-2-C-methyl-D-erythritol 2-phosphate</name>
        <dbReference type="ChEBI" id="CHEBI:57919"/>
    </ligand>
</feature>
<feature type="binding site" evidence="1">
    <location>
        <position position="12"/>
    </location>
    <ligand>
        <name>a divalent metal cation</name>
        <dbReference type="ChEBI" id="CHEBI:60240"/>
    </ligand>
</feature>
<feature type="binding site" evidence="1">
    <location>
        <position position="14"/>
    </location>
    <ligand>
        <name>a divalent metal cation</name>
        <dbReference type="ChEBI" id="CHEBI:60240"/>
    </ligand>
</feature>
<feature type="binding site" evidence="1">
    <location>
        <begin position="38"/>
        <end position="39"/>
    </location>
    <ligand>
        <name>4-CDP-2-C-methyl-D-erythritol 2-phosphate</name>
        <dbReference type="ChEBI" id="CHEBI:57919"/>
    </ligand>
</feature>
<feature type="binding site" evidence="1">
    <location>
        <position position="46"/>
    </location>
    <ligand>
        <name>a divalent metal cation</name>
        <dbReference type="ChEBI" id="CHEBI:60240"/>
    </ligand>
</feature>
<feature type="binding site" evidence="1">
    <location>
        <begin position="60"/>
        <end position="62"/>
    </location>
    <ligand>
        <name>4-CDP-2-C-methyl-D-erythritol 2-phosphate</name>
        <dbReference type="ChEBI" id="CHEBI:57919"/>
    </ligand>
</feature>
<feature type="binding site" evidence="1">
    <location>
        <begin position="136"/>
        <end position="139"/>
    </location>
    <ligand>
        <name>4-CDP-2-C-methyl-D-erythritol 2-phosphate</name>
        <dbReference type="ChEBI" id="CHEBI:57919"/>
    </ligand>
</feature>
<feature type="binding site" evidence="1">
    <location>
        <position position="143"/>
    </location>
    <ligand>
        <name>4-CDP-2-C-methyl-D-erythritol 2-phosphate</name>
        <dbReference type="ChEBI" id="CHEBI:57919"/>
    </ligand>
</feature>
<feature type="binding site" evidence="1">
    <location>
        <position position="146"/>
    </location>
    <ligand>
        <name>4-CDP-2-C-methyl-D-erythritol 2-phosphate</name>
        <dbReference type="ChEBI" id="CHEBI:57919"/>
    </ligand>
</feature>
<feature type="site" description="Transition state stabilizer" evidence="1">
    <location>
        <position position="38"/>
    </location>
</feature>
<feature type="site" description="Transition state stabilizer" evidence="1">
    <location>
        <position position="137"/>
    </location>
</feature>
<comment type="function">
    <text evidence="1">Involved in the biosynthesis of isopentenyl diphosphate (IPP) and dimethylallyl diphosphate (DMAPP), two major building blocks of isoprenoid compounds. Catalyzes the conversion of 4-diphosphocytidyl-2-C-methyl-D-erythritol 2-phosphate (CDP-ME2P) to 2-C-methyl-D-erythritol 2,4-cyclodiphosphate (ME-CPP) with a corresponding release of cytidine 5-monophosphate (CMP).</text>
</comment>
<comment type="catalytic activity">
    <reaction evidence="1">
        <text>4-CDP-2-C-methyl-D-erythritol 2-phosphate = 2-C-methyl-D-erythritol 2,4-cyclic diphosphate + CMP</text>
        <dbReference type="Rhea" id="RHEA:23864"/>
        <dbReference type="ChEBI" id="CHEBI:57919"/>
        <dbReference type="ChEBI" id="CHEBI:58483"/>
        <dbReference type="ChEBI" id="CHEBI:60377"/>
        <dbReference type="EC" id="4.6.1.12"/>
    </reaction>
</comment>
<comment type="cofactor">
    <cofactor evidence="1">
        <name>a divalent metal cation</name>
        <dbReference type="ChEBI" id="CHEBI:60240"/>
    </cofactor>
    <text evidence="1">Binds 1 divalent metal cation per subunit.</text>
</comment>
<comment type="pathway">
    <text evidence="1">Isoprenoid biosynthesis; isopentenyl diphosphate biosynthesis via DXP pathway; isopentenyl diphosphate from 1-deoxy-D-xylulose 5-phosphate: step 4/6.</text>
</comment>
<comment type="subunit">
    <text evidence="1">Homotrimer.</text>
</comment>
<comment type="similarity">
    <text evidence="1">Belongs to the IspF family.</text>
</comment>